<evidence type="ECO:0000255" key="1">
    <source>
        <dbReference type="HAMAP-Rule" id="MF_00676"/>
    </source>
</evidence>
<comment type="similarity">
    <text evidence="1">Belongs to the UPF0260 family.</text>
</comment>
<dbReference type="EMBL" id="CP000738">
    <property type="protein sequence ID" value="ABR59483.1"/>
    <property type="molecule type" value="Genomic_DNA"/>
</dbReference>
<dbReference type="RefSeq" id="WP_011974829.1">
    <property type="nucleotide sequence ID" value="NC_009636.1"/>
</dbReference>
<dbReference type="RefSeq" id="YP_001326318.1">
    <property type="nucleotide sequence ID" value="NC_009636.1"/>
</dbReference>
<dbReference type="STRING" id="366394.Smed_0627"/>
<dbReference type="KEGG" id="smd:Smed_0627"/>
<dbReference type="PATRIC" id="fig|366394.8.peg.3721"/>
<dbReference type="eggNOG" id="COG2983">
    <property type="taxonomic scope" value="Bacteria"/>
</dbReference>
<dbReference type="HOGENOM" id="CLU_109769_0_1_5"/>
<dbReference type="OrthoDB" id="9786855at2"/>
<dbReference type="Proteomes" id="UP000001108">
    <property type="component" value="Chromosome"/>
</dbReference>
<dbReference type="HAMAP" id="MF_00676">
    <property type="entry name" value="UPF0260"/>
    <property type="match status" value="1"/>
</dbReference>
<dbReference type="InterPro" id="IPR005358">
    <property type="entry name" value="Puta_zinc/iron-chelating_dom"/>
</dbReference>
<dbReference type="InterPro" id="IPR008228">
    <property type="entry name" value="UCP006173"/>
</dbReference>
<dbReference type="NCBIfam" id="NF003501">
    <property type="entry name" value="PRK05170.1-5"/>
    <property type="match status" value="1"/>
</dbReference>
<dbReference type="NCBIfam" id="NF003507">
    <property type="entry name" value="PRK05170.2-5"/>
    <property type="match status" value="1"/>
</dbReference>
<dbReference type="PANTHER" id="PTHR37421">
    <property type="entry name" value="UPF0260 PROTEIN YCGN"/>
    <property type="match status" value="1"/>
</dbReference>
<dbReference type="PANTHER" id="PTHR37421:SF1">
    <property type="entry name" value="UPF0260 PROTEIN YCGN"/>
    <property type="match status" value="1"/>
</dbReference>
<dbReference type="Pfam" id="PF03692">
    <property type="entry name" value="CxxCxxCC"/>
    <property type="match status" value="1"/>
</dbReference>
<dbReference type="PIRSF" id="PIRSF006173">
    <property type="entry name" value="UCP006173"/>
    <property type="match status" value="1"/>
</dbReference>
<accession>A6U753</accession>
<protein>
    <recommendedName>
        <fullName evidence="1">UPF0260 protein Smed_0627</fullName>
    </recommendedName>
</protein>
<feature type="chain" id="PRO_1000044814" description="UPF0260 protein Smed_0627">
    <location>
        <begin position="1"/>
        <end position="155"/>
    </location>
</feature>
<name>Y627_SINMW</name>
<gene>
    <name type="ordered locus">Smed_0627</name>
</gene>
<organism>
    <name type="scientific">Sinorhizobium medicae (strain WSM419)</name>
    <name type="common">Ensifer medicae</name>
    <dbReference type="NCBI Taxonomy" id="366394"/>
    <lineage>
        <taxon>Bacteria</taxon>
        <taxon>Pseudomonadati</taxon>
        <taxon>Pseudomonadota</taxon>
        <taxon>Alphaproteobacteria</taxon>
        <taxon>Hyphomicrobiales</taxon>
        <taxon>Rhizobiaceae</taxon>
        <taxon>Sinorhizobium/Ensifer group</taxon>
        <taxon>Sinorhizobium</taxon>
    </lineage>
</organism>
<sequence>MGEMPFWKMKSLEEMSGAEWESLCDGCGLCCLNKLEDWDSSEIAWTSIRCTLLDGESCRCRDYDNRQATVPDCIQLTPEAVREISWLPPTCGYRLVSEGRDLYWWHPLVSGDPETVHAAGISVRGRTVPEDDIDIEDYEDYLVTWPLEVGREPAE</sequence>
<proteinExistence type="inferred from homology"/>
<reference key="1">
    <citation type="submission" date="2007-06" db="EMBL/GenBank/DDBJ databases">
        <title>Complete sequence of Sinorhizobium medicae WSM419 chromosome.</title>
        <authorList>
            <consortium name="US DOE Joint Genome Institute"/>
            <person name="Copeland A."/>
            <person name="Lucas S."/>
            <person name="Lapidus A."/>
            <person name="Barry K."/>
            <person name="Glavina del Rio T."/>
            <person name="Dalin E."/>
            <person name="Tice H."/>
            <person name="Pitluck S."/>
            <person name="Chain P."/>
            <person name="Malfatti S."/>
            <person name="Shin M."/>
            <person name="Vergez L."/>
            <person name="Schmutz J."/>
            <person name="Larimer F."/>
            <person name="Land M."/>
            <person name="Hauser L."/>
            <person name="Kyrpides N."/>
            <person name="Mikhailova N."/>
            <person name="Reeve W.G."/>
            <person name="Richardson P."/>
        </authorList>
    </citation>
    <scope>NUCLEOTIDE SEQUENCE [LARGE SCALE GENOMIC DNA]</scope>
    <source>
        <strain>WSM419</strain>
    </source>
</reference>